<organism>
    <name type="scientific">Arabidopsis thaliana</name>
    <name type="common">Mouse-ear cress</name>
    <dbReference type="NCBI Taxonomy" id="3702"/>
    <lineage>
        <taxon>Eukaryota</taxon>
        <taxon>Viridiplantae</taxon>
        <taxon>Streptophyta</taxon>
        <taxon>Embryophyta</taxon>
        <taxon>Tracheophyta</taxon>
        <taxon>Spermatophyta</taxon>
        <taxon>Magnoliopsida</taxon>
        <taxon>eudicotyledons</taxon>
        <taxon>Gunneridae</taxon>
        <taxon>Pentapetalae</taxon>
        <taxon>rosids</taxon>
        <taxon>malvids</taxon>
        <taxon>Brassicales</taxon>
        <taxon>Brassicaceae</taxon>
        <taxon>Camelineae</taxon>
        <taxon>Arabidopsis</taxon>
    </lineage>
</organism>
<protein>
    <recommendedName>
        <fullName evidence="7">Trafficking protein particle complex II-specific subunit 130 homolog</fullName>
        <shortName evidence="5">AtTRS130</shortName>
        <shortName evidence="7">TRAPP II-specific subunit 130 homolog</shortName>
    </recommendedName>
</protein>
<proteinExistence type="evidence at protein level"/>
<evidence type="ECO:0000256" key="1">
    <source>
        <dbReference type="SAM" id="MobiDB-lite"/>
    </source>
</evidence>
<evidence type="ECO:0000269" key="2">
    <source>
    </source>
</evidence>
<evidence type="ECO:0000269" key="3">
    <source>
    </source>
</evidence>
<evidence type="ECO:0000303" key="4">
    <source>
    </source>
</evidence>
<evidence type="ECO:0000303" key="5">
    <source>
    </source>
</evidence>
<evidence type="ECO:0000303" key="6">
    <source>
    </source>
</evidence>
<evidence type="ECO:0000305" key="7"/>
<evidence type="ECO:0000312" key="8">
    <source>
        <dbReference type="Araport" id="AT5G54440"/>
    </source>
</evidence>
<evidence type="ECO:0000312" key="9">
    <source>
        <dbReference type="EMBL" id="BAA97517.1"/>
    </source>
</evidence>
<evidence type="ECO:0007744" key="10">
    <source>
    </source>
</evidence>
<accession>F4K0C4</accession>
<accession>Q9LSR1</accession>
<feature type="initiator methionine" description="Removed" evidence="10">
    <location>
        <position position="1"/>
    </location>
</feature>
<feature type="chain" id="PRO_0000431450" description="Trafficking protein particle complex II-specific subunit 130 homolog">
    <location>
        <begin position="2"/>
        <end position="1259"/>
    </location>
</feature>
<feature type="region of interest" description="Disordered" evidence="1">
    <location>
        <begin position="479"/>
        <end position="526"/>
    </location>
</feature>
<feature type="modified residue" description="N-acetylalanine" evidence="10">
    <location>
        <position position="2"/>
    </location>
</feature>
<dbReference type="EMBL" id="AB026634">
    <property type="protein sequence ID" value="BAA97517.1"/>
    <property type="status" value="ALT_SEQ"/>
    <property type="molecule type" value="Genomic_DNA"/>
</dbReference>
<dbReference type="EMBL" id="CP002688">
    <property type="protein sequence ID" value="AED96496.1"/>
    <property type="molecule type" value="Genomic_DNA"/>
</dbReference>
<dbReference type="EMBL" id="AY090975">
    <property type="status" value="NOT_ANNOTATED_CDS"/>
    <property type="molecule type" value="mRNA"/>
</dbReference>
<dbReference type="RefSeq" id="NP_200255.5">
    <property type="nucleotide sequence ID" value="NM_124824.7"/>
</dbReference>
<dbReference type="FunCoup" id="F4K0C4">
    <property type="interactions" value="3519"/>
</dbReference>
<dbReference type="STRING" id="3702.F4K0C4"/>
<dbReference type="iPTMnet" id="F4K0C4"/>
<dbReference type="PaxDb" id="3702-AT5G54440.1"/>
<dbReference type="EnsemblPlants" id="AT5G54440.1">
    <property type="protein sequence ID" value="AT5G54440.1"/>
    <property type="gene ID" value="AT5G54440"/>
</dbReference>
<dbReference type="GeneID" id="835532"/>
<dbReference type="Gramene" id="AT5G54440.1">
    <property type="protein sequence ID" value="AT5G54440.1"/>
    <property type="gene ID" value="AT5G54440"/>
</dbReference>
<dbReference type="KEGG" id="ath:AT5G54440"/>
<dbReference type="Araport" id="AT5G54440"/>
<dbReference type="TAIR" id="AT5G54440">
    <property type="gene designation" value="CLUB"/>
</dbReference>
<dbReference type="eggNOG" id="KOG1931">
    <property type="taxonomic scope" value="Eukaryota"/>
</dbReference>
<dbReference type="HOGENOM" id="CLU_006790_0_0_1"/>
<dbReference type="InParanoid" id="F4K0C4"/>
<dbReference type="PRO" id="PR:F4K0C4"/>
<dbReference type="Proteomes" id="UP000006548">
    <property type="component" value="Chromosome 5"/>
</dbReference>
<dbReference type="ExpressionAtlas" id="F4K0C4">
    <property type="expression patterns" value="baseline and differential"/>
</dbReference>
<dbReference type="GO" id="GO:0005769">
    <property type="term" value="C:early endosome"/>
    <property type="evidence" value="ECO:0007669"/>
    <property type="project" value="UniProtKB-SubCell"/>
</dbReference>
<dbReference type="GO" id="GO:0005802">
    <property type="term" value="C:trans-Golgi network"/>
    <property type="evidence" value="ECO:0000314"/>
    <property type="project" value="UniProtKB"/>
</dbReference>
<dbReference type="GO" id="GO:1990071">
    <property type="term" value="C:TRAPPII protein complex"/>
    <property type="evidence" value="ECO:0007669"/>
    <property type="project" value="InterPro"/>
</dbReference>
<dbReference type="GO" id="GO:0000919">
    <property type="term" value="P:cell plate assembly"/>
    <property type="evidence" value="ECO:0000315"/>
    <property type="project" value="TAIR"/>
</dbReference>
<dbReference type="GO" id="GO:0000911">
    <property type="term" value="P:cytokinesis by cell plate formation"/>
    <property type="evidence" value="ECO:0000315"/>
    <property type="project" value="TAIR"/>
</dbReference>
<dbReference type="GO" id="GO:0048193">
    <property type="term" value="P:Golgi vesicle transport"/>
    <property type="evidence" value="ECO:0007669"/>
    <property type="project" value="InterPro"/>
</dbReference>
<dbReference type="InterPro" id="IPR022233">
    <property type="entry name" value="TRAPP_II_complex_TRAPPC10_C"/>
</dbReference>
<dbReference type="InterPro" id="IPR045126">
    <property type="entry name" value="TRAPPC10/Trs130"/>
</dbReference>
<dbReference type="InterPro" id="IPR056913">
    <property type="entry name" value="TRAPPC10/Trs130_N"/>
</dbReference>
<dbReference type="PANTHER" id="PTHR13251">
    <property type="entry name" value="EPILEPSY HOLOPROSENCEPHALY CANDIDATE 1/TMEM1"/>
    <property type="match status" value="1"/>
</dbReference>
<dbReference type="PANTHER" id="PTHR13251:SF3">
    <property type="entry name" value="TRAFFICKING PROTEIN PARTICLE COMPLEX SUBUNIT 10"/>
    <property type="match status" value="1"/>
</dbReference>
<dbReference type="Pfam" id="PF12584">
    <property type="entry name" value="TRAPPC10"/>
    <property type="match status" value="1"/>
</dbReference>
<dbReference type="Pfam" id="PF23036">
    <property type="entry name" value="TRAPPC10_1st"/>
    <property type="match status" value="1"/>
</dbReference>
<sequence>MANYLAQFQTIKNSCDRLVAAVEDVCDLWPTVKGLFEEHQPLKRAFLTNKTRNPVFVENLPVEFILTTDARLRSRFPQEQYLFWFREPYATIVLVTCEDLDEFKNILKPRLKLIVQNDEREWFIVFVSKAHPSNDQATKNVKKVYAKLEVDFSSKKRERCCKLDVHGPEGNFWEDLELKITECIRNTLDRRAQFYEDEIRKLSEQRFMPIWNFCNFFILKESLAFIFEMAHLHEDALREYDELELCYLETVNMPGKQRDFGGFDGEDDQAVLLKPGSKPLTQIVQDDSFREFEFRQYLFACQSRLLFKLNRPFEVASRGYSFVISFAKALTLHESVLPFCMREVWVITACLALIEATASHHHDGVVAPDIEKEFFRLQGDLYSLSRVKFMRLGYLIGYGTDIEKSPLNSACLSMLPWPKPAVWPSLPQDASSEVLEKEKTILQATSRTKHFGIQRKALPLEPSVLLRVANRRRASLSTGNIPEMFDGRPSFTEGSGLEASPRTPSSLKVQAPPMSRTNSSPGNFESPLDRPMRLAEIFVAAEHALRLTISDHDLLKTLSSIQDFENKYLNLTKGAAENYHRSWWKRHGVVLDGEIAAVCFKHGKYDLAANSYEKVCALYAGEGWQDLLAEVLPNLAQCQKILDDQAGYMSSCVRLLSLDKGLFSSKERQAFQSEVVTLAHSEMKNPVPLDVSSLITFSGNTGPPLQLCDGDPGNLSVTVWSGFPDDITLDSLSLTLVATNNTDEGGQALKSSAATVLNPGRNTITFALPPQKPGSYVLGVVTGQIGRLRFRSHSFSKGGPADSDDFMSYEKPTRPILKVSKPRALVDLAAAVSSALLINEAQWIGIIVRPIAYSLKGAILHIDTGPGLKIEDSYGIEMERYMDADCDTGASKAEVFVEDSPVSSKRDSEVLNLCDGKIVFSDWASNVSSILWVPVRALSEKLARGSSSVTPLKQDILEGMRTVALKLEFGVHHNQIFERTIAAHFTDPFDVTTRVANKCNDGTLVLQVMLHSLVKANLIVLDVWLDLQDGFIHGQNDGRPTSTFFPLVVSPGSRAAVVFSICLDKSMSSEGKDLQLPESILNIKYGIHGDRAAGAHRPVDADHSETDTEGRDLVFKSAIVLQRPVLDPCLTVGFLPLPSDGLRVGKLITMQWRVERLKELKESEAVEQQHDEVLYEVNANSENWMIAGRKRGHVSLSEEQGSRVVISILCVPLVAGYVRPPQLGLPNVEEANVSSNPSGPHLVCVLPPLLSSSYCLPVK</sequence>
<gene>
    <name evidence="5" type="primary">TRS130</name>
    <name evidence="4" type="synonym">CLUB</name>
    <name evidence="8" type="ordered locus">At5g54440</name>
    <name evidence="9" type="ORF">F24B18.6</name>
</gene>
<reference key="1">
    <citation type="submission" date="1999-04" db="EMBL/GenBank/DDBJ databases">
        <title>Structural analysis of Arabidopsis thaliana chromosome 5. XI.</title>
        <authorList>
            <person name="Kaneko T."/>
            <person name="Katoh T."/>
            <person name="Asamizu E."/>
            <person name="Sato S."/>
            <person name="Nakamura Y."/>
            <person name="Kotani H."/>
            <person name="Tabata S."/>
        </authorList>
    </citation>
    <scope>NUCLEOTIDE SEQUENCE [LARGE SCALE GENOMIC DNA]</scope>
    <source>
        <strain>cv. Columbia</strain>
    </source>
</reference>
<reference key="2">
    <citation type="journal article" date="2017" name="Plant J.">
        <title>Araport11: a complete reannotation of the Arabidopsis thaliana reference genome.</title>
        <authorList>
            <person name="Cheng C.Y."/>
            <person name="Krishnakumar V."/>
            <person name="Chan A.P."/>
            <person name="Thibaud-Nissen F."/>
            <person name="Schobel S."/>
            <person name="Town C.D."/>
        </authorList>
    </citation>
    <scope>GENOME REANNOTATION</scope>
    <source>
        <strain>cv. Columbia</strain>
    </source>
</reference>
<reference key="3">
    <citation type="journal article" date="2003" name="Science">
        <title>Empirical analysis of transcriptional activity in the Arabidopsis genome.</title>
        <authorList>
            <person name="Yamada K."/>
            <person name="Lim J."/>
            <person name="Dale J.M."/>
            <person name="Chen H."/>
            <person name="Shinn P."/>
            <person name="Palm C.J."/>
            <person name="Southwick A.M."/>
            <person name="Wu H.C."/>
            <person name="Kim C.J."/>
            <person name="Nguyen M."/>
            <person name="Pham P.K."/>
            <person name="Cheuk R.F."/>
            <person name="Karlin-Newmann G."/>
            <person name="Liu S.X."/>
            <person name="Lam B."/>
            <person name="Sakano H."/>
            <person name="Wu T."/>
            <person name="Yu G."/>
            <person name="Miranda M."/>
            <person name="Quach H.L."/>
            <person name="Tripp M."/>
            <person name="Chang C.H."/>
            <person name="Lee J.M."/>
            <person name="Toriumi M.J."/>
            <person name="Chan M.M."/>
            <person name="Tang C.C."/>
            <person name="Onodera C.S."/>
            <person name="Deng J.M."/>
            <person name="Akiyama K."/>
            <person name="Ansari Y."/>
            <person name="Arakawa T."/>
            <person name="Banh J."/>
            <person name="Banno F."/>
            <person name="Bowser L."/>
            <person name="Brooks S.Y."/>
            <person name="Carninci P."/>
            <person name="Chao Q."/>
            <person name="Choy N."/>
            <person name="Enju A."/>
            <person name="Goldsmith A.D."/>
            <person name="Gurjal M."/>
            <person name="Hansen N.F."/>
            <person name="Hayashizaki Y."/>
            <person name="Johnson-Hopson C."/>
            <person name="Hsuan V.W."/>
            <person name="Iida K."/>
            <person name="Karnes M."/>
            <person name="Khan S."/>
            <person name="Koesema E."/>
            <person name="Ishida J."/>
            <person name="Jiang P.X."/>
            <person name="Jones T."/>
            <person name="Kawai J."/>
            <person name="Kamiya A."/>
            <person name="Meyers C."/>
            <person name="Nakajima M."/>
            <person name="Narusaka M."/>
            <person name="Seki M."/>
            <person name="Sakurai T."/>
            <person name="Satou M."/>
            <person name="Tamse R."/>
            <person name="Vaysberg M."/>
            <person name="Wallender E.K."/>
            <person name="Wong C."/>
            <person name="Yamamura Y."/>
            <person name="Yuan S."/>
            <person name="Shinozaki K."/>
            <person name="Davis R.W."/>
            <person name="Theologis A."/>
            <person name="Ecker J.R."/>
        </authorList>
    </citation>
    <scope>NUCLEOTIDE SEQUENCE [LARGE SCALE MRNA]</scope>
    <source>
        <strain>cv. Columbia</strain>
    </source>
</reference>
<reference key="4">
    <citation type="journal article" date="2009" name="Plant Physiol.">
        <title>Large-scale Arabidopsis phosphoproteome profiling reveals novel chloroplast kinase substrates and phosphorylation networks.</title>
        <authorList>
            <person name="Reiland S."/>
            <person name="Messerli G."/>
            <person name="Baerenfaller K."/>
            <person name="Gerrits B."/>
            <person name="Endler A."/>
            <person name="Grossmann J."/>
            <person name="Gruissem W."/>
            <person name="Baginsky S."/>
        </authorList>
    </citation>
    <scope>IDENTIFICATION BY MASS SPECTROMETRY [LARGE SCALE ANALYSIS]</scope>
</reference>
<reference key="5">
    <citation type="journal article" date="2010" name="New Phytol.">
        <title>A putative TRAPPII tethering factor is required for cell plate assembly during cytokinesis in Arabidopsis.</title>
        <authorList>
            <person name="Jaber E."/>
            <person name="Thiele K."/>
            <person name="Kindzierski V."/>
            <person name="Loderer C."/>
            <person name="Rybak K."/>
            <person name="Jurgens G."/>
            <person name="Mayer U."/>
            <person name="Sollner R."/>
            <person name="Wanner G."/>
            <person name="Assaad F.F."/>
        </authorList>
    </citation>
    <scope>FUNCTION</scope>
    <scope>DISRUPTION PHENOTYPE</scope>
</reference>
<reference key="6">
    <citation type="journal article" date="2010" name="Plant Physiol.">
        <title>Tethering factors required for cytokinesis in Arabidopsis.</title>
        <authorList>
            <person name="Thellmann M."/>
            <person name="Rybak K."/>
            <person name="Thiele K."/>
            <person name="Wanner G."/>
            <person name="Assaad F.F."/>
        </authorList>
    </citation>
    <scope>COMPONENT OF THE TRAPPII COMPLEX</scope>
</reference>
<reference key="7">
    <citation type="journal article" date="2011" name="Plant J.">
        <title>A specific role for Arabidopsis TRAPPII in post-Golgi trafficking that is crucial for cytokinesis and cell polarity.</title>
        <authorList>
            <person name="Qi X."/>
            <person name="Kaneda M."/>
            <person name="Chen J."/>
            <person name="Geitmann A."/>
            <person name="Zheng H."/>
        </authorList>
    </citation>
    <scope>FUNCTION</scope>
    <scope>SUBCELLULAR LOCATION</scope>
    <scope>DISRUPTION PHENOTYPE</scope>
</reference>
<reference key="8">
    <citation type="journal article" date="2012" name="Mol. Cell. Proteomics">
        <title>Comparative large-scale characterisation of plant vs. mammal proteins reveals similar and idiosyncratic N-alpha acetylation features.</title>
        <authorList>
            <person name="Bienvenut W.V."/>
            <person name="Sumpton D."/>
            <person name="Martinez A."/>
            <person name="Lilla S."/>
            <person name="Espagne C."/>
            <person name="Meinnel T."/>
            <person name="Giglione C."/>
        </authorList>
    </citation>
    <scope>ACETYLATION [LARGE SCALE ANALYSIS] AT ALA-2</scope>
    <scope>CLEAVAGE OF INITIATOR METHIONINE [LARGE SCALE ANALYSIS]</scope>
    <scope>IDENTIFICATION BY MASS SPECTROMETRY [LARGE SCALE ANALYSIS]</scope>
</reference>
<keyword id="KW-0007">Acetylation</keyword>
<keyword id="KW-0967">Endosome</keyword>
<keyword id="KW-0333">Golgi apparatus</keyword>
<keyword id="KW-1185">Reference proteome</keyword>
<keyword id="KW-0813">Transport</keyword>
<name>TR130_ARATH</name>
<comment type="function">
    <text evidence="2 3">Specific subunit of the TRAPP II complex, a highly conserved vesicle tethering complex that is required for the proper transport of proteins in post-Golgi trafficking pathways to the growing cell plate in mitotic active cells (PubMed:20609115, PubMed:21689172). Required for the polarized and selective transport of PIN2, but not PIN1, to the plasma membrane. Not required for ER-to-Golgi as well as biosynthetic and endocytic vacuolar transport (PubMed:21689172).</text>
</comment>
<comment type="subunit">
    <text evidence="5">Part of the multisubunit TRAPP (transport protein particle) II complex composed of BET3, BET5, TRS20, TRS23, TRS31, TRS33, TRS65, TRS85, TRS120 and TRS130.</text>
</comment>
<comment type="subcellular location">
    <subcellularLocation>
        <location evidence="3">Golgi apparatus</location>
        <location evidence="3">trans-Golgi network</location>
    </subcellularLocation>
    <subcellularLocation>
        <location evidence="6">Early endosome</location>
    </subcellularLocation>
</comment>
<comment type="disruption phenotype">
    <text evidence="2 3">Cytokinesis-defective and seedling-lethal phenotype.</text>
</comment>
<comment type="similarity">
    <text evidence="7">Belongs to the TMEM1 family.</text>
</comment>
<comment type="sequence caution" evidence="7">
    <conflict type="erroneous gene model prediction">
        <sequence resource="EMBL-CDS" id="BAA97517"/>
    </conflict>
</comment>